<name>PX24C_DICDI</name>
<reference key="1">
    <citation type="journal article" date="2005" name="Nature">
        <title>The genome of the social amoeba Dictyostelium discoideum.</title>
        <authorList>
            <person name="Eichinger L."/>
            <person name="Pachebat J.A."/>
            <person name="Gloeckner G."/>
            <person name="Rajandream M.A."/>
            <person name="Sucgang R."/>
            <person name="Berriman M."/>
            <person name="Song J."/>
            <person name="Olsen R."/>
            <person name="Szafranski K."/>
            <person name="Xu Q."/>
            <person name="Tunggal B."/>
            <person name="Kummerfeld S."/>
            <person name="Madera M."/>
            <person name="Konfortov B.A."/>
            <person name="Rivero F."/>
            <person name="Bankier A.T."/>
            <person name="Lehmann R."/>
            <person name="Hamlin N."/>
            <person name="Davies R."/>
            <person name="Gaudet P."/>
            <person name="Fey P."/>
            <person name="Pilcher K."/>
            <person name="Chen G."/>
            <person name="Saunders D."/>
            <person name="Sodergren E.J."/>
            <person name="Davis P."/>
            <person name="Kerhornou A."/>
            <person name="Nie X."/>
            <person name="Hall N."/>
            <person name="Anjard C."/>
            <person name="Hemphill L."/>
            <person name="Bason N."/>
            <person name="Farbrother P."/>
            <person name="Desany B."/>
            <person name="Just E."/>
            <person name="Morio T."/>
            <person name="Rost R."/>
            <person name="Churcher C.M."/>
            <person name="Cooper J."/>
            <person name="Haydock S."/>
            <person name="van Driessche N."/>
            <person name="Cronin A."/>
            <person name="Goodhead I."/>
            <person name="Muzny D.M."/>
            <person name="Mourier T."/>
            <person name="Pain A."/>
            <person name="Lu M."/>
            <person name="Harper D."/>
            <person name="Lindsay R."/>
            <person name="Hauser H."/>
            <person name="James K.D."/>
            <person name="Quiles M."/>
            <person name="Madan Babu M."/>
            <person name="Saito T."/>
            <person name="Buchrieser C."/>
            <person name="Wardroper A."/>
            <person name="Felder M."/>
            <person name="Thangavelu M."/>
            <person name="Johnson D."/>
            <person name="Knights A."/>
            <person name="Loulseged H."/>
            <person name="Mungall K.L."/>
            <person name="Oliver K."/>
            <person name="Price C."/>
            <person name="Quail M.A."/>
            <person name="Urushihara H."/>
            <person name="Hernandez J."/>
            <person name="Rabbinowitsch E."/>
            <person name="Steffen D."/>
            <person name="Sanders M."/>
            <person name="Ma J."/>
            <person name="Kohara Y."/>
            <person name="Sharp S."/>
            <person name="Simmonds M.N."/>
            <person name="Spiegler S."/>
            <person name="Tivey A."/>
            <person name="Sugano S."/>
            <person name="White B."/>
            <person name="Walker D."/>
            <person name="Woodward J.R."/>
            <person name="Winckler T."/>
            <person name="Tanaka Y."/>
            <person name="Shaulsky G."/>
            <person name="Schleicher M."/>
            <person name="Weinstock G.M."/>
            <person name="Rosenthal A."/>
            <person name="Cox E.C."/>
            <person name="Chisholm R.L."/>
            <person name="Gibbs R.A."/>
            <person name="Loomis W.F."/>
            <person name="Platzer M."/>
            <person name="Kay R.R."/>
            <person name="Williams J.G."/>
            <person name="Dear P.H."/>
            <person name="Noegel A.A."/>
            <person name="Barrell B.G."/>
            <person name="Kuspa A."/>
        </authorList>
    </citation>
    <scope>NUCLEOTIDE SEQUENCE [LARGE SCALE GENOMIC DNA]</scope>
    <source>
        <strain>AX4</strain>
    </source>
</reference>
<keyword id="KW-0472">Membrane</keyword>
<keyword id="KW-1185">Reference proteome</keyword>
<keyword id="KW-0732">Signal</keyword>
<keyword id="KW-0812">Transmembrane</keyword>
<keyword id="KW-1133">Transmembrane helix</keyword>
<evidence type="ECO:0000255" key="1"/>
<evidence type="ECO:0000305" key="2"/>
<proteinExistence type="inferred from homology"/>
<accession>Q54GD8</accession>
<dbReference type="EMBL" id="AAFI02000161">
    <property type="protein sequence ID" value="EAL62333.1"/>
    <property type="molecule type" value="Genomic_DNA"/>
</dbReference>
<dbReference type="RefSeq" id="XP_635840.1">
    <property type="nucleotide sequence ID" value="XM_630748.1"/>
</dbReference>
<dbReference type="FunCoup" id="Q54GD8">
    <property type="interactions" value="215"/>
</dbReference>
<dbReference type="STRING" id="44689.Q54GD8"/>
<dbReference type="PaxDb" id="44689-DDB0302425"/>
<dbReference type="EnsemblProtists" id="EAL62333">
    <property type="protein sequence ID" value="EAL62333"/>
    <property type="gene ID" value="DDB_G0290223"/>
</dbReference>
<dbReference type="GeneID" id="8627548"/>
<dbReference type="KEGG" id="ddi:DDB_G0290223"/>
<dbReference type="dictyBase" id="DDB_G0290223"/>
<dbReference type="VEuPathDB" id="AmoebaDB:DDB_G0290223"/>
<dbReference type="eggNOG" id="KOG1944">
    <property type="taxonomic scope" value="Eukaryota"/>
</dbReference>
<dbReference type="HOGENOM" id="CLU_049109_9_0_1"/>
<dbReference type="InParanoid" id="Q54GD8"/>
<dbReference type="OMA" id="QHSVFAY"/>
<dbReference type="PhylomeDB" id="Q54GD8"/>
<dbReference type="PRO" id="PR:Q54GD8"/>
<dbReference type="Proteomes" id="UP000002195">
    <property type="component" value="Chromosome 5"/>
</dbReference>
<dbReference type="GO" id="GO:0005737">
    <property type="term" value="C:cytoplasm"/>
    <property type="evidence" value="ECO:0000318"/>
    <property type="project" value="GO_Central"/>
</dbReference>
<dbReference type="GO" id="GO:0005778">
    <property type="term" value="C:peroxisomal membrane"/>
    <property type="evidence" value="ECO:0000318"/>
    <property type="project" value="GO_Central"/>
</dbReference>
<dbReference type="InterPro" id="IPR007248">
    <property type="entry name" value="Mpv17_PMP22"/>
</dbReference>
<dbReference type="PANTHER" id="PTHR11266">
    <property type="entry name" value="PEROXISOMAL MEMBRANE PROTEIN 2, PXMP2 MPV17"/>
    <property type="match status" value="1"/>
</dbReference>
<dbReference type="PANTHER" id="PTHR11266:SF112">
    <property type="entry name" value="PXMP2_4 FAMILY PROTEIN 3"/>
    <property type="match status" value="1"/>
</dbReference>
<dbReference type="Pfam" id="PF04117">
    <property type="entry name" value="Mpv17_PMP22"/>
    <property type="match status" value="1"/>
</dbReference>
<gene>
    <name type="ORF">DDB_G0290223</name>
</gene>
<protein>
    <recommendedName>
        <fullName>PXMP2/4 family protein 3</fullName>
    </recommendedName>
</protein>
<feature type="signal peptide" evidence="1">
    <location>
        <begin position="1"/>
        <end position="44"/>
    </location>
</feature>
<feature type="chain" id="PRO_0000333835" description="PXMP2/4 family protein 3">
    <location>
        <begin position="45"/>
        <end position="184"/>
    </location>
</feature>
<feature type="transmembrane region" description="Helical" evidence="1">
    <location>
        <begin position="58"/>
        <end position="78"/>
    </location>
</feature>
<feature type="transmembrane region" description="Helical" evidence="1">
    <location>
        <begin position="97"/>
        <end position="117"/>
    </location>
</feature>
<feature type="transmembrane region" description="Helical" evidence="1">
    <location>
        <begin position="159"/>
        <end position="179"/>
    </location>
</feature>
<comment type="subcellular location">
    <subcellularLocation>
        <location evidence="2">Membrane</location>
        <topology evidence="2">Multi-pass membrane protein</topology>
    </subcellularLocation>
</comment>
<comment type="similarity">
    <text evidence="2">Belongs to the peroxisomal membrane protein PXMP2/4 family.</text>
</comment>
<organism>
    <name type="scientific">Dictyostelium discoideum</name>
    <name type="common">Social amoeba</name>
    <dbReference type="NCBI Taxonomy" id="44689"/>
    <lineage>
        <taxon>Eukaryota</taxon>
        <taxon>Amoebozoa</taxon>
        <taxon>Evosea</taxon>
        <taxon>Eumycetozoa</taxon>
        <taxon>Dictyostelia</taxon>
        <taxon>Dictyosteliales</taxon>
        <taxon>Dictyosteliaceae</taxon>
        <taxon>Dictyostelium</taxon>
    </lineage>
</organism>
<sequence length="184" mass="21260">MSNSKPLSLTDAVTTWYMKKLKSKPIQTKALTSATLSFISSVVAQKFIEKKKINWNAVVKFTVWGLISSPLVHYWHIILDRLFKNIKDKYQSWGKLIVDQLVFAPFINIAFYSVLAILDGKPKSILFKLYFDLFPTLKASWKVWPLAQLINFRFVPSHLRVLFGNLVGFCWGIYLSILATKKRN</sequence>